<feature type="chain" id="PRO_0000406873" description="2-isopropylmalate synthase">
    <location>
        <begin position="1"/>
        <end position="567"/>
    </location>
</feature>
<feature type="domain" description="Pyruvate carboxyltransferase" evidence="1">
    <location>
        <begin position="28"/>
        <end position="302"/>
    </location>
</feature>
<feature type="region of interest" description="Regulatory domain" evidence="1">
    <location>
        <begin position="435"/>
        <end position="567"/>
    </location>
</feature>
<feature type="binding site" evidence="1">
    <location>
        <position position="37"/>
    </location>
    <ligand>
        <name>Mg(2+)</name>
        <dbReference type="ChEBI" id="CHEBI:18420"/>
    </ligand>
</feature>
<feature type="binding site" evidence="1">
    <location>
        <position position="241"/>
    </location>
    <ligand>
        <name>Mg(2+)</name>
        <dbReference type="ChEBI" id="CHEBI:18420"/>
    </ligand>
</feature>
<feature type="binding site" evidence="1">
    <location>
        <position position="243"/>
    </location>
    <ligand>
        <name>Mg(2+)</name>
        <dbReference type="ChEBI" id="CHEBI:18420"/>
    </ligand>
</feature>
<feature type="binding site" evidence="1">
    <location>
        <position position="277"/>
    </location>
    <ligand>
        <name>Mg(2+)</name>
        <dbReference type="ChEBI" id="CHEBI:18420"/>
    </ligand>
</feature>
<reference key="1">
    <citation type="journal article" date="2010" name="BMC Genomics">
        <title>Clostridium sticklandii, a specialist in amino acid degradation:revisiting its metabolism through its genome sequence.</title>
        <authorList>
            <person name="Fonknechten N."/>
            <person name="Chaussonnerie S."/>
            <person name="Tricot S."/>
            <person name="Lajus A."/>
            <person name="Andreesen J.R."/>
            <person name="Perchat N."/>
            <person name="Pelletier E."/>
            <person name="Gouyvenoux M."/>
            <person name="Barbe V."/>
            <person name="Salanoubat M."/>
            <person name="Le Paslier D."/>
            <person name="Weissenbach J."/>
            <person name="Cohen G.N."/>
            <person name="Kreimeyer A."/>
        </authorList>
    </citation>
    <scope>NUCLEOTIDE SEQUENCE [LARGE SCALE GENOMIC DNA]</scope>
    <source>
        <strain>ATCC 12662 / DSM 519 / JCM 1433 / CCUG 9281 / NCIMB 10654 / HF</strain>
    </source>
</reference>
<name>LEU1_ACESD</name>
<protein>
    <recommendedName>
        <fullName evidence="1">2-isopropylmalate synthase</fullName>
        <ecNumber evidence="1">2.3.3.13</ecNumber>
    </recommendedName>
    <alternativeName>
        <fullName evidence="1">Alpha-IPM synthase</fullName>
    </alternativeName>
    <alternativeName>
        <fullName evidence="1">Alpha-isopropylmalate synthase</fullName>
    </alternativeName>
</protein>
<evidence type="ECO:0000255" key="1">
    <source>
        <dbReference type="HAMAP-Rule" id="MF_00572"/>
    </source>
</evidence>
<organism>
    <name type="scientific">Acetoanaerobium sticklandii (strain ATCC 12662 / DSM 519 / JCM 1433 / CCUG 9281 / NCIMB 10654 / HF)</name>
    <name type="common">Clostridium sticklandii</name>
    <dbReference type="NCBI Taxonomy" id="499177"/>
    <lineage>
        <taxon>Bacteria</taxon>
        <taxon>Bacillati</taxon>
        <taxon>Bacillota</taxon>
        <taxon>Clostridia</taxon>
        <taxon>Peptostreptococcales</taxon>
        <taxon>Filifactoraceae</taxon>
        <taxon>Acetoanaerobium</taxon>
    </lineage>
</organism>
<proteinExistence type="inferred from homology"/>
<accession>E3PVH7</accession>
<dbReference type="EC" id="2.3.3.13" evidence="1"/>
<dbReference type="EMBL" id="FP565809">
    <property type="protein sequence ID" value="CBH20544.1"/>
    <property type="molecule type" value="Genomic_DNA"/>
</dbReference>
<dbReference type="SMR" id="E3PVH7"/>
<dbReference type="STRING" id="1511.CLOST_0414"/>
<dbReference type="KEGG" id="cst:CLOST_0414"/>
<dbReference type="eggNOG" id="COG0119">
    <property type="taxonomic scope" value="Bacteria"/>
</dbReference>
<dbReference type="HOGENOM" id="CLU_004588_3_0_9"/>
<dbReference type="UniPathway" id="UPA00048">
    <property type="reaction ID" value="UER00070"/>
</dbReference>
<dbReference type="Proteomes" id="UP000007041">
    <property type="component" value="Chromosome"/>
</dbReference>
<dbReference type="GO" id="GO:0005737">
    <property type="term" value="C:cytoplasm"/>
    <property type="evidence" value="ECO:0007669"/>
    <property type="project" value="UniProtKB-SubCell"/>
</dbReference>
<dbReference type="GO" id="GO:0003852">
    <property type="term" value="F:2-isopropylmalate synthase activity"/>
    <property type="evidence" value="ECO:0007669"/>
    <property type="project" value="UniProtKB-UniRule"/>
</dbReference>
<dbReference type="GO" id="GO:0003985">
    <property type="term" value="F:acetyl-CoA C-acetyltransferase activity"/>
    <property type="evidence" value="ECO:0007669"/>
    <property type="project" value="UniProtKB-UniRule"/>
</dbReference>
<dbReference type="GO" id="GO:0000287">
    <property type="term" value="F:magnesium ion binding"/>
    <property type="evidence" value="ECO:0007669"/>
    <property type="project" value="UniProtKB-UniRule"/>
</dbReference>
<dbReference type="GO" id="GO:0009098">
    <property type="term" value="P:L-leucine biosynthetic process"/>
    <property type="evidence" value="ECO:0007669"/>
    <property type="project" value="UniProtKB-UniRule"/>
</dbReference>
<dbReference type="CDD" id="cd07942">
    <property type="entry name" value="DRE_TIM_LeuA"/>
    <property type="match status" value="1"/>
</dbReference>
<dbReference type="Gene3D" id="3.30.160.270">
    <property type="match status" value="1"/>
</dbReference>
<dbReference type="Gene3D" id="3.20.20.70">
    <property type="entry name" value="Aldolase class I"/>
    <property type="match status" value="1"/>
</dbReference>
<dbReference type="HAMAP" id="MF_00572">
    <property type="entry name" value="LeuA_type2"/>
    <property type="match status" value="1"/>
</dbReference>
<dbReference type="InterPro" id="IPR013709">
    <property type="entry name" value="2-isopropylmalate_synth_dimer"/>
</dbReference>
<dbReference type="InterPro" id="IPR002034">
    <property type="entry name" value="AIPM/Hcit_synth_CS"/>
</dbReference>
<dbReference type="InterPro" id="IPR013785">
    <property type="entry name" value="Aldolase_TIM"/>
</dbReference>
<dbReference type="InterPro" id="IPR005668">
    <property type="entry name" value="IPM_Synthase"/>
</dbReference>
<dbReference type="InterPro" id="IPR054692">
    <property type="entry name" value="LeuA-like_post-cat"/>
</dbReference>
<dbReference type="InterPro" id="IPR036230">
    <property type="entry name" value="LeuA_allosteric_dom_sf"/>
</dbReference>
<dbReference type="InterPro" id="IPR039371">
    <property type="entry name" value="LeuA_N_DRE-TIM"/>
</dbReference>
<dbReference type="InterPro" id="IPR000891">
    <property type="entry name" value="PYR_CT"/>
</dbReference>
<dbReference type="NCBIfam" id="TIGR00970">
    <property type="entry name" value="leuA_yeast"/>
    <property type="match status" value="1"/>
</dbReference>
<dbReference type="NCBIfam" id="NF002991">
    <property type="entry name" value="PRK03739.1"/>
    <property type="match status" value="1"/>
</dbReference>
<dbReference type="PANTHER" id="PTHR46911">
    <property type="match status" value="1"/>
</dbReference>
<dbReference type="PANTHER" id="PTHR46911:SF1">
    <property type="entry name" value="2-ISOPROPYLMALATE SYNTHASE"/>
    <property type="match status" value="1"/>
</dbReference>
<dbReference type="Pfam" id="PF00682">
    <property type="entry name" value="HMGL-like"/>
    <property type="match status" value="1"/>
</dbReference>
<dbReference type="Pfam" id="PF22615">
    <property type="entry name" value="IPMS_D2"/>
    <property type="match status" value="1"/>
</dbReference>
<dbReference type="Pfam" id="PF08502">
    <property type="entry name" value="LeuA_dimer"/>
    <property type="match status" value="1"/>
</dbReference>
<dbReference type="SMART" id="SM00917">
    <property type="entry name" value="LeuA_dimer"/>
    <property type="match status" value="1"/>
</dbReference>
<dbReference type="SUPFAM" id="SSF110921">
    <property type="entry name" value="2-isopropylmalate synthase LeuA, allosteric (dimerisation) domain"/>
    <property type="match status" value="1"/>
</dbReference>
<dbReference type="SUPFAM" id="SSF51569">
    <property type="entry name" value="Aldolase"/>
    <property type="match status" value="1"/>
</dbReference>
<dbReference type="SUPFAM" id="SSF89000">
    <property type="entry name" value="post-HMGL domain-like"/>
    <property type="match status" value="1"/>
</dbReference>
<dbReference type="PROSITE" id="PS00815">
    <property type="entry name" value="AIPM_HOMOCIT_SYNTH_1"/>
    <property type="match status" value="1"/>
</dbReference>
<dbReference type="PROSITE" id="PS00816">
    <property type="entry name" value="AIPM_HOMOCIT_SYNTH_2"/>
    <property type="match status" value="1"/>
</dbReference>
<dbReference type="PROSITE" id="PS50991">
    <property type="entry name" value="PYR_CT"/>
    <property type="match status" value="1"/>
</dbReference>
<keyword id="KW-0028">Amino-acid biosynthesis</keyword>
<keyword id="KW-0100">Branched-chain amino acid biosynthesis</keyword>
<keyword id="KW-0963">Cytoplasm</keyword>
<keyword id="KW-0432">Leucine biosynthesis</keyword>
<keyword id="KW-0460">Magnesium</keyword>
<keyword id="KW-0479">Metal-binding</keyword>
<keyword id="KW-1185">Reference proteome</keyword>
<keyword id="KW-0808">Transferase</keyword>
<comment type="function">
    <text evidence="1">Catalyzes the condensation of the acetyl group of acetyl-CoA with 3-methyl-2-oxobutanoate (2-ketoisovalerate) to form 3-carboxy-3-hydroxy-4-methylpentanoate (2-isopropylmalate).</text>
</comment>
<comment type="catalytic activity">
    <reaction evidence="1">
        <text>3-methyl-2-oxobutanoate + acetyl-CoA + H2O = (2S)-2-isopropylmalate + CoA + H(+)</text>
        <dbReference type="Rhea" id="RHEA:21524"/>
        <dbReference type="ChEBI" id="CHEBI:1178"/>
        <dbReference type="ChEBI" id="CHEBI:11851"/>
        <dbReference type="ChEBI" id="CHEBI:15377"/>
        <dbReference type="ChEBI" id="CHEBI:15378"/>
        <dbReference type="ChEBI" id="CHEBI:57287"/>
        <dbReference type="ChEBI" id="CHEBI:57288"/>
        <dbReference type="EC" id="2.3.3.13"/>
    </reaction>
</comment>
<comment type="cofactor">
    <cofactor evidence="1">
        <name>Mg(2+)</name>
        <dbReference type="ChEBI" id="CHEBI:18420"/>
    </cofactor>
</comment>
<comment type="pathway">
    <text evidence="1">Amino-acid biosynthesis; L-leucine biosynthesis; L-leucine from 3-methyl-2-oxobutanoate: step 1/4.</text>
</comment>
<comment type="subunit">
    <text evidence="1">Homodimer.</text>
</comment>
<comment type="subcellular location">
    <subcellularLocation>
        <location evidence="1">Cytoplasm</location>
    </subcellularLocation>
</comment>
<comment type="similarity">
    <text evidence="1">Belongs to the alpha-IPM synthase/homocitrate synthase family. LeuA type 2 subfamily.</text>
</comment>
<gene>
    <name evidence="1" type="primary">leuA</name>
    <name type="ordered locus">CLOST_0414</name>
</gene>
<sequence>MNYKKYKGYETIVLEDRNWPSRKIEKAPQWCSVDLRDGNQALITPMGLKQKLRFFEYLVKMGFKTIEIGFPAASDTEYEFTRTLIEEGYIPEDVTIQVLTQSRIQIINKTFEALKGTKNAVVHLYNSTSTLQREVVFRNSKEETIELAVFGARAIKELALKNPETNFTFEYSPESFTGTEMDFAAEICNSVIDVWKPTKDKKVIINLPSTVEMATPNTYADQIEYMCRNLKSRENIIVSLHAHNDRGTGVAATELGLMAGADRVEGTLFGNGERTGNADILNLGMNLYTQGINPELDFSDINSMIEIYEESTAMNVHPRHPYAGDLVFTAFSGSHQDAIKKGMARMNKQAQYWEVPYLPLDPKDIGKSYEPIIRINSQSGKGGVSFILEQNYGLYIPKDFQKDAGRVITAYSDKMQTEIGAEEIYEVFLNEYVDIRTPLQLNYHKTQSVDSDWDLVFIEAEIEYNMQKHYVQAEGNGVVSAFCNSLKEIIGMDIDIVDYRGHSMEYGTKAKAISYIELKNETGERFYGAGTSSSVGKSSLRAVVSAINKMILAQQTKDMDTQEEDIA</sequence>